<dbReference type="EMBL" id="X66035">
    <property type="protein sequence ID" value="CAA46834.1"/>
    <property type="molecule type" value="mRNA"/>
</dbReference>
<dbReference type="PIR" id="S26596">
    <property type="entry name" value="S26596"/>
</dbReference>
<dbReference type="RefSeq" id="NP_777097.1">
    <property type="nucleotide sequence ID" value="NM_174672.2"/>
</dbReference>
<dbReference type="SMR" id="Q01888"/>
<dbReference type="FunCoup" id="Q01888">
    <property type="interactions" value="600"/>
</dbReference>
<dbReference type="STRING" id="9913.ENSBTAP00000031299"/>
<dbReference type="TCDB" id="2.A.29.12.1">
    <property type="family name" value="the mitochondrial carrier (mc) family"/>
</dbReference>
<dbReference type="PaxDb" id="9913-ENSBTAP00000031299"/>
<dbReference type="GeneID" id="282524"/>
<dbReference type="KEGG" id="bta:282524"/>
<dbReference type="CTD" id="8034"/>
<dbReference type="eggNOG" id="KOG0752">
    <property type="taxonomic scope" value="Eukaryota"/>
</dbReference>
<dbReference type="InParanoid" id="Q01888"/>
<dbReference type="OrthoDB" id="270584at2759"/>
<dbReference type="Proteomes" id="UP000009136">
    <property type="component" value="Unplaced"/>
</dbReference>
<dbReference type="GO" id="GO:0005743">
    <property type="term" value="C:mitochondrial inner membrane"/>
    <property type="evidence" value="ECO:0000318"/>
    <property type="project" value="GO_Central"/>
</dbReference>
<dbReference type="GO" id="GO:0015228">
    <property type="term" value="F:coenzyme A transmembrane transporter activity"/>
    <property type="evidence" value="ECO:0000318"/>
    <property type="project" value="GO_Central"/>
</dbReference>
<dbReference type="GO" id="GO:1990559">
    <property type="term" value="P:mitochondrial coenzyme A transmembrane transport"/>
    <property type="evidence" value="ECO:0000318"/>
    <property type="project" value="GO_Central"/>
</dbReference>
<dbReference type="FunFam" id="1.50.40.10:FF:000052">
    <property type="entry name" value="Solute carrier family 25 member 16"/>
    <property type="match status" value="1"/>
</dbReference>
<dbReference type="Gene3D" id="1.50.40.10">
    <property type="entry name" value="Mitochondrial carrier domain"/>
    <property type="match status" value="1"/>
</dbReference>
<dbReference type="InterPro" id="IPR002167">
    <property type="entry name" value="GDC-like"/>
</dbReference>
<dbReference type="InterPro" id="IPR002067">
    <property type="entry name" value="Mit_carrier"/>
</dbReference>
<dbReference type="InterPro" id="IPR018108">
    <property type="entry name" value="Mitochondrial_sb/sol_carrier"/>
</dbReference>
<dbReference type="InterPro" id="IPR023395">
    <property type="entry name" value="Mt_carrier_dom_sf"/>
</dbReference>
<dbReference type="PANTHER" id="PTHR24089">
    <property type="entry name" value="SOLUTE CARRIER FAMILY 25"/>
    <property type="match status" value="1"/>
</dbReference>
<dbReference type="Pfam" id="PF00153">
    <property type="entry name" value="Mito_carr"/>
    <property type="match status" value="3"/>
</dbReference>
<dbReference type="PRINTS" id="PR00928">
    <property type="entry name" value="GRAVESDC"/>
</dbReference>
<dbReference type="PRINTS" id="PR00926">
    <property type="entry name" value="MITOCARRIER"/>
</dbReference>
<dbReference type="SUPFAM" id="SSF103506">
    <property type="entry name" value="Mitochondrial carrier"/>
    <property type="match status" value="1"/>
</dbReference>
<dbReference type="PROSITE" id="PS50920">
    <property type="entry name" value="SOLCAR"/>
    <property type="match status" value="3"/>
</dbReference>
<name>GDC_BOVIN</name>
<keyword id="KW-0472">Membrane</keyword>
<keyword id="KW-0496">Mitochondrion</keyword>
<keyword id="KW-0999">Mitochondrion inner membrane</keyword>
<keyword id="KW-1185">Reference proteome</keyword>
<keyword id="KW-0677">Repeat</keyword>
<keyword id="KW-0812">Transmembrane</keyword>
<keyword id="KW-1133">Transmembrane helix</keyword>
<keyword id="KW-0813">Transport</keyword>
<gene>
    <name type="primary">SLC25A16</name>
    <name type="synonym">GDA</name>
    <name type="synonym">GDC</name>
</gene>
<protein>
    <recommendedName>
        <fullName>Solute carrier family 25 member 16</fullName>
    </recommendedName>
    <alternativeName>
        <fullName evidence="4">Graves disease carrier protein</fullName>
        <shortName evidence="4">GDC</shortName>
    </alternativeName>
    <alternativeName>
        <fullName>Mitochondrial solute carrier protein homolog</fullName>
    </alternativeName>
</protein>
<evidence type="ECO:0000250" key="1">
    <source>
        <dbReference type="UniProtKB" id="P16260"/>
    </source>
</evidence>
<evidence type="ECO:0000255" key="2"/>
<evidence type="ECO:0000269" key="3">
    <source>
    </source>
</evidence>
<evidence type="ECO:0000303" key="4">
    <source>
    </source>
</evidence>
<evidence type="ECO:0000305" key="5"/>
<reference key="1">
    <citation type="journal article" date="1992" name="DNA Seq.">
        <title>Sequence and pattern of expression of a bovine homologue of a human mitochondrial transport protein associated with Grave's disease.</title>
        <authorList>
            <person name="Fiermonte G."/>
            <person name="Runswick M.J."/>
            <person name="Walker J.E."/>
            <person name="Palmieri F."/>
        </authorList>
    </citation>
    <scope>NUCLEOTIDE SEQUENCE [MRNA]</scope>
    <scope>TISSUE SPECIFICITY</scope>
    <source>
        <tissue>Heart</tissue>
    </source>
</reference>
<accession>Q01888</accession>
<comment type="function">
    <text evidence="1">May be involved in the transport of coenzyme A in the mitochondrial matrix. Very little is known about the physiological function of this carrier.</text>
</comment>
<comment type="subcellular location">
    <subcellularLocation>
        <location evidence="1">Mitochondrion inner membrane</location>
        <topology evidence="2">Multi-pass membrane protein</topology>
    </subcellularLocation>
</comment>
<comment type="tissue specificity">
    <text evidence="3">Mostly in thyroid, liver, lung, kidney and to a lesser extent in heart and skeletal muscle.</text>
</comment>
<comment type="similarity">
    <text evidence="5">Belongs to the mitochondrial carrier (TC 2.A.29) family.</text>
</comment>
<sequence>MAAAAAALAATEPPPAMPQAAGAGGPAARRDFYWLRSFLAGGIAGCCAKTTVAPLDRVKVLLQAHNHHYRHLGVFSTLRAVPKKEGYLGLYKGNGAMMIRIFPYGAIQFMAFEHYKTLITTKLGVSGHVHRLMAGSMAGMTAVICTYPLDMVRVRLAFQVKGEHTYTGIIHAFKTIYAKEGGFLGFYRGLMPTILGMAPYAGVSFFTFGTLKSVGLSYAPTLLGRPSSDNPNVLVLKTHINLLCGGVAGAIAQTISYPFDVTRRRMQLGAVLPEFEKCLTMRETMKYVYGHHGIRKGLYRGLSLNYIRCVPSQAVAFTTYELMKQFFHLN</sequence>
<feature type="chain" id="PRO_0000090615" description="Solute carrier family 25 member 16">
    <location>
        <begin position="1"/>
        <end position="330"/>
    </location>
</feature>
<feature type="transmembrane region" description="Helical; Name=1" evidence="2">
    <location>
        <begin position="33"/>
        <end position="52"/>
    </location>
</feature>
<feature type="transmembrane region" description="Helical; Name=2" evidence="2">
    <location>
        <begin position="95"/>
        <end position="112"/>
    </location>
</feature>
<feature type="transmembrane region" description="Helical; Name=3" evidence="2">
    <location>
        <begin position="132"/>
        <end position="149"/>
    </location>
</feature>
<feature type="transmembrane region" description="Helical; Name=4" evidence="2">
    <location>
        <begin position="189"/>
        <end position="209"/>
    </location>
</feature>
<feature type="transmembrane region" description="Helical; Name=5" evidence="2">
    <location>
        <begin position="242"/>
        <end position="262"/>
    </location>
</feature>
<feature type="transmembrane region" description="Helical; Name=6" evidence="2">
    <location>
        <begin position="297"/>
        <end position="317"/>
    </location>
</feature>
<feature type="repeat" description="Solcar 1">
    <location>
        <begin position="32"/>
        <end position="118"/>
    </location>
</feature>
<feature type="repeat" description="Solcar 2">
    <location>
        <begin position="126"/>
        <end position="214"/>
    </location>
</feature>
<feature type="repeat" description="Solcar 3">
    <location>
        <begin position="236"/>
        <end position="326"/>
    </location>
</feature>
<proteinExistence type="evidence at transcript level"/>
<organism>
    <name type="scientific">Bos taurus</name>
    <name type="common">Bovine</name>
    <dbReference type="NCBI Taxonomy" id="9913"/>
    <lineage>
        <taxon>Eukaryota</taxon>
        <taxon>Metazoa</taxon>
        <taxon>Chordata</taxon>
        <taxon>Craniata</taxon>
        <taxon>Vertebrata</taxon>
        <taxon>Euteleostomi</taxon>
        <taxon>Mammalia</taxon>
        <taxon>Eutheria</taxon>
        <taxon>Laurasiatheria</taxon>
        <taxon>Artiodactyla</taxon>
        <taxon>Ruminantia</taxon>
        <taxon>Pecora</taxon>
        <taxon>Bovidae</taxon>
        <taxon>Bovinae</taxon>
        <taxon>Bos</taxon>
    </lineage>
</organism>